<name>PANB_XANAC</name>
<organism>
    <name type="scientific">Xanthomonas axonopodis pv. citri (strain 306)</name>
    <dbReference type="NCBI Taxonomy" id="190486"/>
    <lineage>
        <taxon>Bacteria</taxon>
        <taxon>Pseudomonadati</taxon>
        <taxon>Pseudomonadota</taxon>
        <taxon>Gammaproteobacteria</taxon>
        <taxon>Lysobacterales</taxon>
        <taxon>Lysobacteraceae</taxon>
        <taxon>Xanthomonas</taxon>
    </lineage>
</organism>
<reference key="1">
    <citation type="journal article" date="2002" name="Nature">
        <title>Comparison of the genomes of two Xanthomonas pathogens with differing host specificities.</title>
        <authorList>
            <person name="da Silva A.C.R."/>
            <person name="Ferro J.A."/>
            <person name="Reinach F.C."/>
            <person name="Farah C.S."/>
            <person name="Furlan L.R."/>
            <person name="Quaggio R.B."/>
            <person name="Monteiro-Vitorello C.B."/>
            <person name="Van Sluys M.A."/>
            <person name="Almeida N.F. Jr."/>
            <person name="Alves L.M.C."/>
            <person name="do Amaral A.M."/>
            <person name="Bertolini M.C."/>
            <person name="Camargo L.E.A."/>
            <person name="Camarotte G."/>
            <person name="Cannavan F."/>
            <person name="Cardozo J."/>
            <person name="Chambergo F."/>
            <person name="Ciapina L.P."/>
            <person name="Cicarelli R.M.B."/>
            <person name="Coutinho L.L."/>
            <person name="Cursino-Santos J.R."/>
            <person name="El-Dorry H."/>
            <person name="Faria J.B."/>
            <person name="Ferreira A.J.S."/>
            <person name="Ferreira R.C.C."/>
            <person name="Ferro M.I.T."/>
            <person name="Formighieri E.F."/>
            <person name="Franco M.C."/>
            <person name="Greggio C.C."/>
            <person name="Gruber A."/>
            <person name="Katsuyama A.M."/>
            <person name="Kishi L.T."/>
            <person name="Leite R.P."/>
            <person name="Lemos E.G.M."/>
            <person name="Lemos M.V.F."/>
            <person name="Locali E.C."/>
            <person name="Machado M.A."/>
            <person name="Madeira A.M.B.N."/>
            <person name="Martinez-Rossi N.M."/>
            <person name="Martins E.C."/>
            <person name="Meidanis J."/>
            <person name="Menck C.F.M."/>
            <person name="Miyaki C.Y."/>
            <person name="Moon D.H."/>
            <person name="Moreira L.M."/>
            <person name="Novo M.T.M."/>
            <person name="Okura V.K."/>
            <person name="Oliveira M.C."/>
            <person name="Oliveira V.R."/>
            <person name="Pereira H.A."/>
            <person name="Rossi A."/>
            <person name="Sena J.A.D."/>
            <person name="Silva C."/>
            <person name="de Souza R.F."/>
            <person name="Spinola L.A.F."/>
            <person name="Takita M.A."/>
            <person name="Tamura R.E."/>
            <person name="Teixeira E.C."/>
            <person name="Tezza R.I.D."/>
            <person name="Trindade dos Santos M."/>
            <person name="Truffi D."/>
            <person name="Tsai S.M."/>
            <person name="White F.F."/>
            <person name="Setubal J.C."/>
            <person name="Kitajima J.P."/>
        </authorList>
    </citation>
    <scope>NUCLEOTIDE SEQUENCE [LARGE SCALE GENOMIC DNA]</scope>
    <source>
        <strain>306</strain>
    </source>
</reference>
<sequence>MSSHADSKPWTVPALAQAKREGRKLVMLTAYDAGFARTFDANGVDLILVGDSLGMVVQGHDSTLPVTTADMVYHTASVARALDRALLVADLSFQADATPERALDAATQLLQAGAEMVKIEGAGHKLEVIRYLVEREIPVCSHLGLTPQSVLRFGGYKVQGRGEAGEQLRRDAQAVVDAGASLLVLECVPTPIATQISAELSVPTIGIGAGPGCDGQVLVMHDMLGLDSGHRRPKFVKDFLAEGGSVAGAVRAYAQAVRDGSFPDAEHAYAA</sequence>
<proteinExistence type="inferred from homology"/>
<protein>
    <recommendedName>
        <fullName evidence="1">3-methyl-2-oxobutanoate hydroxymethyltransferase</fullName>
        <ecNumber evidence="1">2.1.2.11</ecNumber>
    </recommendedName>
    <alternativeName>
        <fullName evidence="1">Ketopantoate hydroxymethyltransferase</fullName>
        <shortName evidence="1">KPHMT</shortName>
    </alternativeName>
</protein>
<evidence type="ECO:0000255" key="1">
    <source>
        <dbReference type="HAMAP-Rule" id="MF_00156"/>
    </source>
</evidence>
<keyword id="KW-0963">Cytoplasm</keyword>
<keyword id="KW-0460">Magnesium</keyword>
<keyword id="KW-0479">Metal-binding</keyword>
<keyword id="KW-0566">Pantothenate biosynthesis</keyword>
<keyword id="KW-0808">Transferase</keyword>
<accession>Q8PLL1</accession>
<dbReference type="EC" id="2.1.2.11" evidence="1"/>
<dbReference type="EMBL" id="AE008923">
    <property type="protein sequence ID" value="AAM36648.1"/>
    <property type="molecule type" value="Genomic_DNA"/>
</dbReference>
<dbReference type="RefSeq" id="WP_005923398.1">
    <property type="nucleotide sequence ID" value="NC_003919.1"/>
</dbReference>
<dbReference type="SMR" id="Q8PLL1"/>
<dbReference type="GeneID" id="66910933"/>
<dbReference type="KEGG" id="xac:XAC1785"/>
<dbReference type="eggNOG" id="COG0413">
    <property type="taxonomic scope" value="Bacteria"/>
</dbReference>
<dbReference type="HOGENOM" id="CLU_036645_1_0_6"/>
<dbReference type="UniPathway" id="UPA00028">
    <property type="reaction ID" value="UER00003"/>
</dbReference>
<dbReference type="Proteomes" id="UP000000576">
    <property type="component" value="Chromosome"/>
</dbReference>
<dbReference type="GO" id="GO:0005737">
    <property type="term" value="C:cytoplasm"/>
    <property type="evidence" value="ECO:0007669"/>
    <property type="project" value="UniProtKB-SubCell"/>
</dbReference>
<dbReference type="GO" id="GO:0003864">
    <property type="term" value="F:3-methyl-2-oxobutanoate hydroxymethyltransferase activity"/>
    <property type="evidence" value="ECO:0007669"/>
    <property type="project" value="UniProtKB-UniRule"/>
</dbReference>
<dbReference type="GO" id="GO:0000287">
    <property type="term" value="F:magnesium ion binding"/>
    <property type="evidence" value="ECO:0007669"/>
    <property type="project" value="TreeGrafter"/>
</dbReference>
<dbReference type="GO" id="GO:0015940">
    <property type="term" value="P:pantothenate biosynthetic process"/>
    <property type="evidence" value="ECO:0007669"/>
    <property type="project" value="UniProtKB-UniRule"/>
</dbReference>
<dbReference type="CDD" id="cd06557">
    <property type="entry name" value="KPHMT-like"/>
    <property type="match status" value="1"/>
</dbReference>
<dbReference type="FunFam" id="3.20.20.60:FF:000032">
    <property type="entry name" value="3-methyl-2-oxobutanoate hydroxymethyltransferase"/>
    <property type="match status" value="1"/>
</dbReference>
<dbReference type="Gene3D" id="3.20.20.60">
    <property type="entry name" value="Phosphoenolpyruvate-binding domains"/>
    <property type="match status" value="1"/>
</dbReference>
<dbReference type="HAMAP" id="MF_00156">
    <property type="entry name" value="PanB"/>
    <property type="match status" value="1"/>
</dbReference>
<dbReference type="InterPro" id="IPR003700">
    <property type="entry name" value="Pantoate_hydroxy_MeTrfase"/>
</dbReference>
<dbReference type="InterPro" id="IPR015813">
    <property type="entry name" value="Pyrv/PenolPyrv_kinase-like_dom"/>
</dbReference>
<dbReference type="InterPro" id="IPR040442">
    <property type="entry name" value="Pyrv_kinase-like_dom_sf"/>
</dbReference>
<dbReference type="NCBIfam" id="TIGR00222">
    <property type="entry name" value="panB"/>
    <property type="match status" value="1"/>
</dbReference>
<dbReference type="NCBIfam" id="NF001452">
    <property type="entry name" value="PRK00311.1"/>
    <property type="match status" value="1"/>
</dbReference>
<dbReference type="PANTHER" id="PTHR20881">
    <property type="entry name" value="3-METHYL-2-OXOBUTANOATE HYDROXYMETHYLTRANSFERASE"/>
    <property type="match status" value="1"/>
</dbReference>
<dbReference type="PANTHER" id="PTHR20881:SF0">
    <property type="entry name" value="3-METHYL-2-OXOBUTANOATE HYDROXYMETHYLTRANSFERASE"/>
    <property type="match status" value="1"/>
</dbReference>
<dbReference type="Pfam" id="PF02548">
    <property type="entry name" value="Pantoate_transf"/>
    <property type="match status" value="1"/>
</dbReference>
<dbReference type="PIRSF" id="PIRSF000388">
    <property type="entry name" value="Pantoate_hydroxy_MeTrfase"/>
    <property type="match status" value="1"/>
</dbReference>
<dbReference type="SUPFAM" id="SSF51621">
    <property type="entry name" value="Phosphoenolpyruvate/pyruvate domain"/>
    <property type="match status" value="1"/>
</dbReference>
<feature type="chain" id="PRO_0000184909" description="3-methyl-2-oxobutanoate hydroxymethyltransferase">
    <location>
        <begin position="1"/>
        <end position="271"/>
    </location>
</feature>
<feature type="active site" description="Proton acceptor" evidence="1">
    <location>
        <position position="186"/>
    </location>
</feature>
<feature type="binding site" evidence="1">
    <location>
        <begin position="51"/>
        <end position="52"/>
    </location>
    <ligand>
        <name>3-methyl-2-oxobutanoate</name>
        <dbReference type="ChEBI" id="CHEBI:11851"/>
    </ligand>
</feature>
<feature type="binding site" evidence="1">
    <location>
        <position position="51"/>
    </location>
    <ligand>
        <name>Mg(2+)</name>
        <dbReference type="ChEBI" id="CHEBI:18420"/>
    </ligand>
</feature>
<feature type="binding site" evidence="1">
    <location>
        <position position="90"/>
    </location>
    <ligand>
        <name>3-methyl-2-oxobutanoate</name>
        <dbReference type="ChEBI" id="CHEBI:11851"/>
    </ligand>
</feature>
<feature type="binding site" evidence="1">
    <location>
        <position position="90"/>
    </location>
    <ligand>
        <name>Mg(2+)</name>
        <dbReference type="ChEBI" id="CHEBI:18420"/>
    </ligand>
</feature>
<feature type="binding site" evidence="1">
    <location>
        <position position="118"/>
    </location>
    <ligand>
        <name>3-methyl-2-oxobutanoate</name>
        <dbReference type="ChEBI" id="CHEBI:11851"/>
    </ligand>
</feature>
<feature type="binding site" evidence="1">
    <location>
        <position position="120"/>
    </location>
    <ligand>
        <name>Mg(2+)</name>
        <dbReference type="ChEBI" id="CHEBI:18420"/>
    </ligand>
</feature>
<comment type="function">
    <text evidence="1">Catalyzes the reversible reaction in which hydroxymethyl group from 5,10-methylenetetrahydrofolate is transferred onto alpha-ketoisovalerate to form ketopantoate.</text>
</comment>
<comment type="catalytic activity">
    <reaction evidence="1">
        <text>3-methyl-2-oxobutanoate + (6R)-5,10-methylene-5,6,7,8-tetrahydrofolate + H2O = 2-dehydropantoate + (6S)-5,6,7,8-tetrahydrofolate</text>
        <dbReference type="Rhea" id="RHEA:11824"/>
        <dbReference type="ChEBI" id="CHEBI:11561"/>
        <dbReference type="ChEBI" id="CHEBI:11851"/>
        <dbReference type="ChEBI" id="CHEBI:15377"/>
        <dbReference type="ChEBI" id="CHEBI:15636"/>
        <dbReference type="ChEBI" id="CHEBI:57453"/>
        <dbReference type="EC" id="2.1.2.11"/>
    </reaction>
</comment>
<comment type="cofactor">
    <cofactor evidence="1">
        <name>Mg(2+)</name>
        <dbReference type="ChEBI" id="CHEBI:18420"/>
    </cofactor>
    <text evidence="1">Binds 1 Mg(2+) ion per subunit.</text>
</comment>
<comment type="pathway">
    <text evidence="1">Cofactor biosynthesis; (R)-pantothenate biosynthesis; (R)-pantoate from 3-methyl-2-oxobutanoate: step 1/2.</text>
</comment>
<comment type="subunit">
    <text evidence="1">Homodecamer; pentamer of dimers.</text>
</comment>
<comment type="subcellular location">
    <subcellularLocation>
        <location evidence="1">Cytoplasm</location>
    </subcellularLocation>
</comment>
<comment type="similarity">
    <text evidence="1">Belongs to the PanB family.</text>
</comment>
<gene>
    <name evidence="1" type="primary">panB</name>
    <name type="ordered locus">XAC1785</name>
</gene>